<accession>Q99S17</accession>
<comment type="function">
    <text evidence="1">Releases the supercoiling and torsional tension of DNA, which is introduced during the DNA replication and transcription, by transiently cleaving and rejoining one strand of the DNA duplex. Introduces a single-strand break via transesterification at a target site in duplex DNA. The scissile phosphodiester is attacked by the catalytic tyrosine of the enzyme, resulting in the formation of a DNA-(5'-phosphotyrosyl)-enzyme intermediate and the expulsion of a 3'-OH DNA strand. The free DNA strand then undergoes passage around the unbroken strand, thus removing DNA supercoils. Finally, in the religation step, the DNA 3'-OH attacks the covalent intermediate to expel the active-site tyrosine and restore the DNA phosphodiester backbone.</text>
</comment>
<comment type="catalytic activity">
    <reaction evidence="1">
        <text>ATP-independent breakage of single-stranded DNA, followed by passage and rejoining.</text>
        <dbReference type="EC" id="5.6.2.1"/>
    </reaction>
</comment>
<comment type="cofactor">
    <cofactor evidence="1">
        <name>Mg(2+)</name>
        <dbReference type="ChEBI" id="CHEBI:18420"/>
    </cofactor>
</comment>
<comment type="similarity">
    <text evidence="1 2">Belongs to the type IA topoisomerase family.</text>
</comment>
<proteinExistence type="inferred from homology"/>
<keyword id="KW-0238">DNA-binding</keyword>
<keyword id="KW-0413">Isomerase</keyword>
<keyword id="KW-0460">Magnesium</keyword>
<keyword id="KW-0479">Metal-binding</keyword>
<keyword id="KW-0799">Topoisomerase</keyword>
<feature type="chain" id="PRO_0000286371" description="DNA topoisomerase 3">
    <location>
        <begin position="1"/>
        <end position="711"/>
    </location>
</feature>
<feature type="domain" description="Toprim" evidence="1">
    <location>
        <begin position="2"/>
        <end position="135"/>
    </location>
</feature>
<feature type="domain" description="Topo IA-type catalytic" evidence="2">
    <location>
        <begin position="152"/>
        <end position="580"/>
    </location>
</feature>
<feature type="region of interest" description="Interaction with DNA" evidence="1">
    <location>
        <begin position="186"/>
        <end position="191"/>
    </location>
</feature>
<feature type="region of interest" description="Disordered" evidence="3">
    <location>
        <begin position="691"/>
        <end position="711"/>
    </location>
</feature>
<feature type="active site" description="O-(5'-phospho-DNA)-tyrosine intermediate" evidence="2">
    <location>
        <position position="305"/>
    </location>
</feature>
<feature type="binding site" evidence="1">
    <location>
        <position position="8"/>
    </location>
    <ligand>
        <name>Mg(2+)</name>
        <dbReference type="ChEBI" id="CHEBI:18420"/>
        <note>catalytic</note>
    </ligand>
</feature>
<feature type="binding site" evidence="1">
    <location>
        <position position="104"/>
    </location>
    <ligand>
        <name>Mg(2+)</name>
        <dbReference type="ChEBI" id="CHEBI:18420"/>
        <note>catalytic</note>
    </ligand>
</feature>
<feature type="site" description="Interaction with DNA" evidence="1">
    <location>
        <position position="60"/>
    </location>
</feature>
<feature type="site" description="Interaction with DNA" evidence="1">
    <location>
        <position position="167"/>
    </location>
</feature>
<feature type="site" description="Interaction with DNA" evidence="1">
    <location>
        <position position="175"/>
    </location>
</feature>
<feature type="site" description="Interaction with DNA" evidence="1">
    <location>
        <position position="307"/>
    </location>
</feature>
<dbReference type="EC" id="5.6.2.1" evidence="1"/>
<dbReference type="EMBL" id="BA000017">
    <property type="protein sequence ID" value="BAB58416.1"/>
    <property type="molecule type" value="Genomic_DNA"/>
</dbReference>
<dbReference type="RefSeq" id="WP_000838479.1">
    <property type="nucleotide sequence ID" value="NC_002758.2"/>
</dbReference>
<dbReference type="SMR" id="Q99S17"/>
<dbReference type="KEGG" id="sav:SAV2254"/>
<dbReference type="HOGENOM" id="CLU_002929_5_2_9"/>
<dbReference type="PhylomeDB" id="Q99S17"/>
<dbReference type="Proteomes" id="UP000002481">
    <property type="component" value="Chromosome"/>
</dbReference>
<dbReference type="GO" id="GO:0043597">
    <property type="term" value="C:cytoplasmic replication fork"/>
    <property type="evidence" value="ECO:0007669"/>
    <property type="project" value="TreeGrafter"/>
</dbReference>
<dbReference type="GO" id="GO:0003677">
    <property type="term" value="F:DNA binding"/>
    <property type="evidence" value="ECO:0007669"/>
    <property type="project" value="UniProtKB-KW"/>
</dbReference>
<dbReference type="GO" id="GO:0003917">
    <property type="term" value="F:DNA topoisomerase type I (single strand cut, ATP-independent) activity"/>
    <property type="evidence" value="ECO:0007669"/>
    <property type="project" value="UniProtKB-UniRule"/>
</dbReference>
<dbReference type="GO" id="GO:0000287">
    <property type="term" value="F:magnesium ion binding"/>
    <property type="evidence" value="ECO:0007669"/>
    <property type="project" value="UniProtKB-UniRule"/>
</dbReference>
<dbReference type="GO" id="GO:0006310">
    <property type="term" value="P:DNA recombination"/>
    <property type="evidence" value="ECO:0007669"/>
    <property type="project" value="TreeGrafter"/>
</dbReference>
<dbReference type="GO" id="GO:0006281">
    <property type="term" value="P:DNA repair"/>
    <property type="evidence" value="ECO:0007669"/>
    <property type="project" value="TreeGrafter"/>
</dbReference>
<dbReference type="GO" id="GO:0006265">
    <property type="term" value="P:DNA topological change"/>
    <property type="evidence" value="ECO:0007669"/>
    <property type="project" value="UniProtKB-UniRule"/>
</dbReference>
<dbReference type="CDD" id="cd00186">
    <property type="entry name" value="TOP1Ac"/>
    <property type="match status" value="1"/>
</dbReference>
<dbReference type="CDD" id="cd03362">
    <property type="entry name" value="TOPRIM_TopoIA_TopoIII"/>
    <property type="match status" value="1"/>
</dbReference>
<dbReference type="Gene3D" id="3.40.50.140">
    <property type="match status" value="1"/>
</dbReference>
<dbReference type="Gene3D" id="1.10.460.10">
    <property type="entry name" value="Topoisomerase I, domain 2"/>
    <property type="match status" value="1"/>
</dbReference>
<dbReference type="Gene3D" id="2.70.20.10">
    <property type="entry name" value="Topoisomerase I, domain 3"/>
    <property type="match status" value="1"/>
</dbReference>
<dbReference type="Gene3D" id="1.10.290.10">
    <property type="entry name" value="Topoisomerase I, domain 4"/>
    <property type="match status" value="1"/>
</dbReference>
<dbReference type="HAMAP" id="MF_00953">
    <property type="entry name" value="Topoisom_3_prok"/>
    <property type="match status" value="1"/>
</dbReference>
<dbReference type="InterPro" id="IPR000380">
    <property type="entry name" value="Topo_IA"/>
</dbReference>
<dbReference type="InterPro" id="IPR003601">
    <property type="entry name" value="Topo_IA_2"/>
</dbReference>
<dbReference type="InterPro" id="IPR023406">
    <property type="entry name" value="Topo_IA_AS"/>
</dbReference>
<dbReference type="InterPro" id="IPR013497">
    <property type="entry name" value="Topo_IA_cen"/>
</dbReference>
<dbReference type="InterPro" id="IPR013824">
    <property type="entry name" value="Topo_IA_cen_sub1"/>
</dbReference>
<dbReference type="InterPro" id="IPR013825">
    <property type="entry name" value="Topo_IA_cen_sub2"/>
</dbReference>
<dbReference type="InterPro" id="IPR013826">
    <property type="entry name" value="Topo_IA_cen_sub3"/>
</dbReference>
<dbReference type="InterPro" id="IPR023405">
    <property type="entry name" value="Topo_IA_core_domain"/>
</dbReference>
<dbReference type="InterPro" id="IPR003602">
    <property type="entry name" value="Topo_IA_DNA-bd_dom"/>
</dbReference>
<dbReference type="InterPro" id="IPR005738">
    <property type="entry name" value="TopoIII"/>
</dbReference>
<dbReference type="InterPro" id="IPR006171">
    <property type="entry name" value="TOPRIM_dom"/>
</dbReference>
<dbReference type="InterPro" id="IPR034144">
    <property type="entry name" value="TOPRIM_TopoIII"/>
</dbReference>
<dbReference type="NCBIfam" id="NF005829">
    <property type="entry name" value="PRK07726.1"/>
    <property type="match status" value="1"/>
</dbReference>
<dbReference type="NCBIfam" id="TIGR01056">
    <property type="entry name" value="topB"/>
    <property type="match status" value="1"/>
</dbReference>
<dbReference type="PANTHER" id="PTHR11390:SF21">
    <property type="entry name" value="DNA TOPOISOMERASE 3-ALPHA"/>
    <property type="match status" value="1"/>
</dbReference>
<dbReference type="PANTHER" id="PTHR11390">
    <property type="entry name" value="PROKARYOTIC DNA TOPOISOMERASE"/>
    <property type="match status" value="1"/>
</dbReference>
<dbReference type="Pfam" id="PF01131">
    <property type="entry name" value="Topoisom_bac"/>
    <property type="match status" value="1"/>
</dbReference>
<dbReference type="Pfam" id="PF01751">
    <property type="entry name" value="Toprim"/>
    <property type="match status" value="1"/>
</dbReference>
<dbReference type="PRINTS" id="PR00417">
    <property type="entry name" value="PRTPISMRASEI"/>
</dbReference>
<dbReference type="SMART" id="SM00437">
    <property type="entry name" value="TOP1Ac"/>
    <property type="match status" value="1"/>
</dbReference>
<dbReference type="SMART" id="SM00436">
    <property type="entry name" value="TOP1Bc"/>
    <property type="match status" value="1"/>
</dbReference>
<dbReference type="SMART" id="SM00493">
    <property type="entry name" value="TOPRIM"/>
    <property type="match status" value="1"/>
</dbReference>
<dbReference type="SUPFAM" id="SSF56712">
    <property type="entry name" value="Prokaryotic type I DNA topoisomerase"/>
    <property type="match status" value="1"/>
</dbReference>
<dbReference type="PROSITE" id="PS00396">
    <property type="entry name" value="TOPO_IA_1"/>
    <property type="match status" value="1"/>
</dbReference>
<dbReference type="PROSITE" id="PS52039">
    <property type="entry name" value="TOPO_IA_2"/>
    <property type="match status" value="1"/>
</dbReference>
<dbReference type="PROSITE" id="PS50880">
    <property type="entry name" value="TOPRIM"/>
    <property type="match status" value="1"/>
</dbReference>
<protein>
    <recommendedName>
        <fullName evidence="1">DNA topoisomerase 3</fullName>
        <ecNumber evidence="1">5.6.2.1</ecNumber>
    </recommendedName>
    <alternativeName>
        <fullName evidence="1">DNA topoisomerase III</fullName>
    </alternativeName>
</protein>
<gene>
    <name evidence="1" type="primary">topB</name>
    <name type="ordered locus">SAV2254</name>
</gene>
<evidence type="ECO:0000255" key="1">
    <source>
        <dbReference type="HAMAP-Rule" id="MF_00953"/>
    </source>
</evidence>
<evidence type="ECO:0000255" key="2">
    <source>
        <dbReference type="PROSITE-ProRule" id="PRU01383"/>
    </source>
</evidence>
<evidence type="ECO:0000256" key="3">
    <source>
        <dbReference type="SAM" id="MobiDB-lite"/>
    </source>
</evidence>
<reference key="1">
    <citation type="journal article" date="2001" name="Lancet">
        <title>Whole genome sequencing of meticillin-resistant Staphylococcus aureus.</title>
        <authorList>
            <person name="Kuroda M."/>
            <person name="Ohta T."/>
            <person name="Uchiyama I."/>
            <person name="Baba T."/>
            <person name="Yuzawa H."/>
            <person name="Kobayashi I."/>
            <person name="Cui L."/>
            <person name="Oguchi A."/>
            <person name="Aoki K."/>
            <person name="Nagai Y."/>
            <person name="Lian J.-Q."/>
            <person name="Ito T."/>
            <person name="Kanamori M."/>
            <person name="Matsumaru H."/>
            <person name="Maruyama A."/>
            <person name="Murakami H."/>
            <person name="Hosoyama A."/>
            <person name="Mizutani-Ui Y."/>
            <person name="Takahashi N.K."/>
            <person name="Sawano T."/>
            <person name="Inoue R."/>
            <person name="Kaito C."/>
            <person name="Sekimizu K."/>
            <person name="Hirakawa H."/>
            <person name="Kuhara S."/>
            <person name="Goto S."/>
            <person name="Yabuzaki J."/>
            <person name="Kanehisa M."/>
            <person name="Yamashita A."/>
            <person name="Oshima K."/>
            <person name="Furuya K."/>
            <person name="Yoshino C."/>
            <person name="Shiba T."/>
            <person name="Hattori M."/>
            <person name="Ogasawara N."/>
            <person name="Hayashi H."/>
            <person name="Hiramatsu K."/>
        </authorList>
    </citation>
    <scope>NUCLEOTIDE SEQUENCE [LARGE SCALE GENOMIC DNA]</scope>
    <source>
        <strain>Mu50 / ATCC 700699</strain>
    </source>
</reference>
<name>TOP3_STAAM</name>
<organism>
    <name type="scientific">Staphylococcus aureus (strain Mu50 / ATCC 700699)</name>
    <dbReference type="NCBI Taxonomy" id="158878"/>
    <lineage>
        <taxon>Bacteria</taxon>
        <taxon>Bacillati</taxon>
        <taxon>Bacillota</taxon>
        <taxon>Bacilli</taxon>
        <taxon>Bacillales</taxon>
        <taxon>Staphylococcaceae</taxon>
        <taxon>Staphylococcus</taxon>
    </lineage>
</organism>
<sequence>MKSLILAEKPSVARDIADALQINQKRNGYFENNQYIVTWALGHLVTNATPEQYDKNLKEWRLEDLPIIPKYMKTVVIGKTSKQFKTVKALILDNKVKDIIIATDAGREGELVARLILDKVGNKKPIRRLWISSVTKKAIQQGFKNLKDGRQYNDLYYAALARSEADWIVGINATRALTTKYDAQLSLGRVQTPTIQLVNTRQQEINQFKPQQYFTLSLTVKGFDFQLESNQRYTNKETLEQMVNNLKNVDGKIKSVATKHKKSYPQSLYNLTDLQQDMYRRYKIGPKETLNTLQSLYERHKVVTYPRTDSNYLTTDMVDTMKERIQATMATTYKDQARPLMSKTFSSKMSIFNNQKVSDHHAIIPTEVRPVMSDLSNRELKLYDMIVERFLEALMPPHEYDAITVTLEVAGHTFVLKENVTTVLGFKSIRQGESITEMQQPFSEGDEVKISKTNIREHETTPPEYFNEGSLLKAMENPQNFIQLKDKKYAQTLKQTGGIGTVATRADIIDKLFNMNAIESRDGKIKVTSKGKQILELAPEELTSPLLTAQWEEKLLLIERGKYQAKTFINEMKDFTKDVVNGIKNSDRKYKHDNLTTTECPTCGKFMIKVKTKNGQMLVCQDPSCKTKKNVQRKTNARCPNCKKKLTLFGKGKEAVYRCVCGHSETQAHMDQRMKSKSSGKVSRKEMKKYMNKNEGLDNNPFKDALKNLNL</sequence>